<sequence>MFCVAPPELETKMNITKGGLVLFSANSNSSCMELSKKIAERLGVEMGKVQVYQEPNRETRVQIQESVRGKDVFIIQTVSKDVNTTIMELLIMVYACKTSCAKSIIGVIPYFPYSKQCKMRKRGSIVSKLLASMMCKAGLTHLITMDLHQKEIQGFFNIPVDNLRASPFLLQYIQEEIPDYRNAVIVAKSPASAKRAQSFAERLRLGIAVIHGEAQDAESDLVDGRHSPPMVRSVAAIHPSLEIPMLIPKEKPPITVVGDVGGRIAIIVDDIIDDVDSFLAAAETLKERGAYKIFVMATHGLLSSDAPRLIEESAIDEVVVTNTIPHEIQKLQCPKIKTVDISMILSEAIRRIHNGESMSYLFRNIGLDD</sequence>
<evidence type="ECO:0000250" key="1">
    <source>
        <dbReference type="UniProtKB" id="O60256"/>
    </source>
</evidence>
<evidence type="ECO:0000305" key="2"/>
<evidence type="ECO:0007744" key="3">
    <source>
    </source>
</evidence>
<feature type="chain" id="PRO_0000141084" description="Phosphoribosyl pyrophosphate synthase-associated protein 2">
    <location>
        <begin position="1"/>
        <end position="369"/>
    </location>
</feature>
<feature type="modified residue" description="N-acetylmethionine" evidence="1">
    <location>
        <position position="1"/>
    </location>
</feature>
<feature type="modified residue" description="Phosphoserine" evidence="1">
    <location>
        <position position="219"/>
    </location>
</feature>
<feature type="modified residue" description="Phosphoserine" evidence="3">
    <location>
        <position position="227"/>
    </location>
</feature>
<feature type="modified residue" description="Phosphoserine" evidence="1">
    <location>
        <position position="233"/>
    </location>
</feature>
<gene>
    <name type="primary">Prpsap2</name>
</gene>
<comment type="function">
    <text>Seems to play a negative regulatory role in 5-phosphoribose 1-diphosphate synthesis.</text>
</comment>
<comment type="subunit">
    <text>Binds to PRPS1 and PRPS2.</text>
</comment>
<comment type="tissue specificity">
    <text>Ubiquitous.</text>
</comment>
<comment type="similarity">
    <text evidence="2">Belongs to the ribose-phosphate pyrophosphokinase family.</text>
</comment>
<reference key="1">
    <citation type="journal article" date="1997" name="Biochim. Biophys. Acta">
        <title>Cloning and sequencing of rat cDNA for the 41-kDa phosphoribosylpyrophosphate synthetase-associated protein has a high homology to the catalytic subunits and the 39-kDa associated protein.</title>
        <authorList>
            <person name="Sonoda T."/>
            <person name="Ishizuka T."/>
            <person name="Kita K."/>
            <person name="Ishijima S."/>
            <person name="Tatibana M."/>
        </authorList>
    </citation>
    <scope>NUCLEOTIDE SEQUENCE [MRNA]</scope>
    <source>
        <strain>Sprague-Dawley</strain>
    </source>
</reference>
<reference key="2">
    <citation type="journal article" date="2012" name="Nat. Commun.">
        <title>Quantitative maps of protein phosphorylation sites across 14 different rat organs and tissues.</title>
        <authorList>
            <person name="Lundby A."/>
            <person name="Secher A."/>
            <person name="Lage K."/>
            <person name="Nordsborg N.B."/>
            <person name="Dmytriyev A."/>
            <person name="Lundby C."/>
            <person name="Olsen J.V."/>
        </authorList>
    </citation>
    <scope>PHOSPHORYLATION [LARGE SCALE ANALYSIS] AT SER-227</scope>
    <scope>IDENTIFICATION BY MASS SPECTROMETRY [LARGE SCALE ANALYSIS]</scope>
</reference>
<proteinExistence type="evidence at protein level"/>
<keyword id="KW-0007">Acetylation</keyword>
<keyword id="KW-0545">Nucleotide biosynthesis</keyword>
<keyword id="KW-0597">Phosphoprotein</keyword>
<keyword id="KW-1185">Reference proteome</keyword>
<protein>
    <recommendedName>
        <fullName>Phosphoribosyl pyrophosphate synthase-associated protein 2</fullName>
        <shortName>PRPP synthase-associated protein 2</shortName>
    </recommendedName>
    <alternativeName>
        <fullName>41 kDa phosphoribosypyrophosphate synthetase-associated protein</fullName>
        <shortName>PAP41</shortName>
    </alternativeName>
</protein>
<dbReference type="EMBL" id="D84434">
    <property type="protein sequence ID" value="BAA19517.1"/>
    <property type="molecule type" value="mRNA"/>
</dbReference>
<dbReference type="RefSeq" id="NP_476472.1">
    <property type="nucleotide sequence ID" value="NM_057131.2"/>
</dbReference>
<dbReference type="RefSeq" id="XP_006246496.1">
    <property type="nucleotide sequence ID" value="XM_006246434.3"/>
</dbReference>
<dbReference type="RefSeq" id="XP_006246497.1">
    <property type="nucleotide sequence ID" value="XM_006246435.5"/>
</dbReference>
<dbReference type="RefSeq" id="XP_006246498.1">
    <property type="nucleotide sequence ID" value="XM_006246436.5"/>
</dbReference>
<dbReference type="RefSeq" id="XP_006246499.1">
    <property type="nucleotide sequence ID" value="XM_006246437.5"/>
</dbReference>
<dbReference type="RefSeq" id="XP_006246500.1">
    <property type="nucleotide sequence ID" value="XM_006246438.3"/>
</dbReference>
<dbReference type="RefSeq" id="XP_038941006.1">
    <property type="nucleotide sequence ID" value="XM_039085078.2"/>
</dbReference>
<dbReference type="RefSeq" id="XP_063124396.1">
    <property type="nucleotide sequence ID" value="XM_063268326.1"/>
</dbReference>
<dbReference type="RefSeq" id="XP_063124397.1">
    <property type="nucleotide sequence ID" value="XM_063268327.1"/>
</dbReference>
<dbReference type="RefSeq" id="XP_063124398.1">
    <property type="nucleotide sequence ID" value="XM_063268328.1"/>
</dbReference>
<dbReference type="RefSeq" id="XP_063124399.1">
    <property type="nucleotide sequence ID" value="XM_063268329.1"/>
</dbReference>
<dbReference type="RefSeq" id="XP_063124400.1">
    <property type="nucleotide sequence ID" value="XM_063268330.1"/>
</dbReference>
<dbReference type="RefSeq" id="XP_063124401.1">
    <property type="nucleotide sequence ID" value="XM_063268331.1"/>
</dbReference>
<dbReference type="SMR" id="O08618"/>
<dbReference type="BioGRID" id="250719">
    <property type="interactions" value="3"/>
</dbReference>
<dbReference type="FunCoup" id="O08618">
    <property type="interactions" value="2519"/>
</dbReference>
<dbReference type="IntAct" id="O08618">
    <property type="interactions" value="2"/>
</dbReference>
<dbReference type="STRING" id="10116.ENSRNOP00000003697"/>
<dbReference type="iPTMnet" id="O08618"/>
<dbReference type="PhosphoSitePlus" id="O08618"/>
<dbReference type="jPOST" id="O08618"/>
<dbReference type="PaxDb" id="10116-ENSRNOP00000003697"/>
<dbReference type="Ensembl" id="ENSRNOT00000003697.4">
    <property type="protein sequence ID" value="ENSRNOP00000003697.2"/>
    <property type="gene ID" value="ENSRNOG00000002724.8"/>
</dbReference>
<dbReference type="GeneID" id="117272"/>
<dbReference type="KEGG" id="rno:117272"/>
<dbReference type="UCSC" id="RGD:620207">
    <property type="organism name" value="rat"/>
</dbReference>
<dbReference type="AGR" id="RGD:620207"/>
<dbReference type="CTD" id="5636"/>
<dbReference type="RGD" id="620207">
    <property type="gene designation" value="Prpsap2"/>
</dbReference>
<dbReference type="eggNOG" id="KOG1503">
    <property type="taxonomic scope" value="Eukaryota"/>
</dbReference>
<dbReference type="GeneTree" id="ENSGT00950000182803"/>
<dbReference type="InParanoid" id="O08618"/>
<dbReference type="OMA" id="HYAYARS"/>
<dbReference type="OrthoDB" id="413572at2759"/>
<dbReference type="PhylomeDB" id="O08618"/>
<dbReference type="TreeFam" id="TF106367"/>
<dbReference type="SABIO-RK" id="O08618"/>
<dbReference type="PRO" id="PR:O08618"/>
<dbReference type="Proteomes" id="UP000002494">
    <property type="component" value="Chromosome 10"/>
</dbReference>
<dbReference type="Bgee" id="ENSRNOG00000002724">
    <property type="expression patterns" value="Expressed in thymus and 20 other cell types or tissues"/>
</dbReference>
<dbReference type="ExpressionAtlas" id="O08618">
    <property type="expression patterns" value="baseline and differential"/>
</dbReference>
<dbReference type="GO" id="GO:0005737">
    <property type="term" value="C:cytoplasm"/>
    <property type="evidence" value="ECO:0000318"/>
    <property type="project" value="GO_Central"/>
</dbReference>
<dbReference type="GO" id="GO:0032991">
    <property type="term" value="C:protein-containing complex"/>
    <property type="evidence" value="ECO:0000314"/>
    <property type="project" value="RGD"/>
</dbReference>
<dbReference type="GO" id="GO:0002189">
    <property type="term" value="C:ribose phosphate diphosphokinase complex"/>
    <property type="evidence" value="ECO:0000314"/>
    <property type="project" value="RGD"/>
</dbReference>
<dbReference type="GO" id="GO:0030234">
    <property type="term" value="F:enzyme regulator activity"/>
    <property type="evidence" value="ECO:0000318"/>
    <property type="project" value="GO_Central"/>
</dbReference>
<dbReference type="GO" id="GO:0042802">
    <property type="term" value="F:identical protein binding"/>
    <property type="evidence" value="ECO:0000266"/>
    <property type="project" value="RGD"/>
</dbReference>
<dbReference type="GO" id="GO:0000287">
    <property type="term" value="F:magnesium ion binding"/>
    <property type="evidence" value="ECO:0007669"/>
    <property type="project" value="InterPro"/>
</dbReference>
<dbReference type="GO" id="GO:0006015">
    <property type="term" value="P:5-phosphoribose 1-diphosphate biosynthetic process"/>
    <property type="evidence" value="ECO:0000318"/>
    <property type="project" value="GO_Central"/>
</dbReference>
<dbReference type="GO" id="GO:0060348">
    <property type="term" value="P:bone development"/>
    <property type="evidence" value="ECO:0000266"/>
    <property type="project" value="RGD"/>
</dbReference>
<dbReference type="GO" id="GO:0006164">
    <property type="term" value="P:purine nucleotide biosynthetic process"/>
    <property type="evidence" value="ECO:0000318"/>
    <property type="project" value="GO_Central"/>
</dbReference>
<dbReference type="CDD" id="cd06223">
    <property type="entry name" value="PRTases_typeI"/>
    <property type="match status" value="1"/>
</dbReference>
<dbReference type="FunFam" id="3.40.50.2020:FF:000012">
    <property type="entry name" value="Phosphoribosyl pyrophosphate synthase-associated protein 2 isoform 1"/>
    <property type="match status" value="1"/>
</dbReference>
<dbReference type="FunFam" id="3.40.50.2020:FF:000014">
    <property type="entry name" value="Ribose-phosphate pyrophosphokinase 1"/>
    <property type="match status" value="1"/>
</dbReference>
<dbReference type="Gene3D" id="3.40.50.2020">
    <property type="match status" value="2"/>
</dbReference>
<dbReference type="InterPro" id="IPR029099">
    <property type="entry name" value="Pribosyltran_N"/>
</dbReference>
<dbReference type="InterPro" id="IPR000836">
    <property type="entry name" value="PRibTrfase_dom"/>
</dbReference>
<dbReference type="InterPro" id="IPR029057">
    <property type="entry name" value="PRTase-like"/>
</dbReference>
<dbReference type="InterPro" id="IPR005946">
    <property type="entry name" value="Rib-P_diPkinase"/>
</dbReference>
<dbReference type="NCBIfam" id="TIGR01251">
    <property type="entry name" value="ribP_PPkin"/>
    <property type="match status" value="1"/>
</dbReference>
<dbReference type="PANTHER" id="PTHR10210:SF29">
    <property type="entry name" value="PHOSPHORIBOSYL PYROPHOSPHATE SYNTHASE-ASSOCIATED PROTEIN 2"/>
    <property type="match status" value="1"/>
</dbReference>
<dbReference type="PANTHER" id="PTHR10210">
    <property type="entry name" value="RIBOSE-PHOSPHATE DIPHOSPHOKINASE FAMILY MEMBER"/>
    <property type="match status" value="1"/>
</dbReference>
<dbReference type="Pfam" id="PF14572">
    <property type="entry name" value="Pribosyl_synth"/>
    <property type="match status" value="1"/>
</dbReference>
<dbReference type="Pfam" id="PF13793">
    <property type="entry name" value="Pribosyltran_N"/>
    <property type="match status" value="1"/>
</dbReference>
<dbReference type="SMART" id="SM01400">
    <property type="entry name" value="Pribosyltran_N"/>
    <property type="match status" value="1"/>
</dbReference>
<dbReference type="SUPFAM" id="SSF53271">
    <property type="entry name" value="PRTase-like"/>
    <property type="match status" value="2"/>
</dbReference>
<name>KPRB_RAT</name>
<organism>
    <name type="scientific">Rattus norvegicus</name>
    <name type="common">Rat</name>
    <dbReference type="NCBI Taxonomy" id="10116"/>
    <lineage>
        <taxon>Eukaryota</taxon>
        <taxon>Metazoa</taxon>
        <taxon>Chordata</taxon>
        <taxon>Craniata</taxon>
        <taxon>Vertebrata</taxon>
        <taxon>Euteleostomi</taxon>
        <taxon>Mammalia</taxon>
        <taxon>Eutheria</taxon>
        <taxon>Euarchontoglires</taxon>
        <taxon>Glires</taxon>
        <taxon>Rodentia</taxon>
        <taxon>Myomorpha</taxon>
        <taxon>Muroidea</taxon>
        <taxon>Muridae</taxon>
        <taxon>Murinae</taxon>
        <taxon>Rattus</taxon>
    </lineage>
</organism>
<accession>O08618</accession>